<comment type="function">
    <text evidence="1">Involved in pre-rRNA and tRNA processing. Utilizes the methyl donor S-adenosyl-L-methionine to catalyze the site-specific 2'-hydroxyl methylation of ribose moieties in rRNA and tRNA. Site specificity is provided by a guide RNA that base pairs with the substrate. Methylation occurs at a characteristic distance from the sequence involved in base pairing with the guide RNA.</text>
</comment>
<comment type="subunit">
    <text evidence="1">Interacts with nop5. Component of box C/D small ribonucleoprotein (sRNP) particles that contain rpl7ae, FlpA and nop5, plus a guide RNA.</text>
</comment>
<comment type="similarity">
    <text evidence="1">Belongs to the methyltransferase superfamily. Fibrillarin family.</text>
</comment>
<organism>
    <name type="scientific">Methanococcus voltae</name>
    <dbReference type="NCBI Taxonomy" id="2188"/>
    <lineage>
        <taxon>Archaea</taxon>
        <taxon>Methanobacteriati</taxon>
        <taxon>Methanobacteriota</taxon>
        <taxon>Methanomada group</taxon>
        <taxon>Methanococci</taxon>
        <taxon>Methanococcales</taxon>
        <taxon>Methanococcaceae</taxon>
        <taxon>Methanococcus</taxon>
    </lineage>
</organism>
<proteinExistence type="inferred from homology"/>
<sequence length="228" mass="25619">MAKIKEKFDNVFELDLGDGIKRIGTKSLVPNKRVYGEKLVNVKNTEYRVWNPNKSKLGASIINGLKEMPIKKGSKVLYLGASAGTTPSHVADVAEDSPVYAVEFAPRIMREFIESCEGRKNLFPILGDANKPEEYANIVEKVDVIFEDVAQPNQAEILIKNAKWFLKKGGYGMISIKARSVDVTENPRVIFEAQKEIMEQNGFKIVDAINIEPFEKDHMLFVGIWNGQ</sequence>
<dbReference type="EC" id="2.1.1.-" evidence="1"/>
<dbReference type="EMBL" id="X73988">
    <property type="protein sequence ID" value="CAA52166.1"/>
    <property type="molecule type" value="Genomic_DNA"/>
</dbReference>
<dbReference type="PIR" id="S34646">
    <property type="entry name" value="S34646"/>
</dbReference>
<dbReference type="SMR" id="P35553"/>
<dbReference type="OrthoDB" id="6244at2157"/>
<dbReference type="GO" id="GO:1990259">
    <property type="term" value="F:histone H2AQ104 methyltransferase activity"/>
    <property type="evidence" value="ECO:0007669"/>
    <property type="project" value="TreeGrafter"/>
</dbReference>
<dbReference type="GO" id="GO:0003723">
    <property type="term" value="F:RNA binding"/>
    <property type="evidence" value="ECO:0007669"/>
    <property type="project" value="UniProtKB-UniRule"/>
</dbReference>
<dbReference type="GO" id="GO:0008649">
    <property type="term" value="F:rRNA methyltransferase activity"/>
    <property type="evidence" value="ECO:0007669"/>
    <property type="project" value="TreeGrafter"/>
</dbReference>
<dbReference type="GO" id="GO:0000494">
    <property type="term" value="P:box C/D sno(s)RNA 3'-end processing"/>
    <property type="evidence" value="ECO:0007669"/>
    <property type="project" value="TreeGrafter"/>
</dbReference>
<dbReference type="GO" id="GO:0008033">
    <property type="term" value="P:tRNA processing"/>
    <property type="evidence" value="ECO:0007669"/>
    <property type="project" value="UniProtKB-UniRule"/>
</dbReference>
<dbReference type="CDD" id="cd02440">
    <property type="entry name" value="AdoMet_MTases"/>
    <property type="match status" value="1"/>
</dbReference>
<dbReference type="Gene3D" id="3.30.200.20">
    <property type="entry name" value="Phosphorylase Kinase, domain 1"/>
    <property type="match status" value="1"/>
</dbReference>
<dbReference type="Gene3D" id="3.40.50.150">
    <property type="entry name" value="Vaccinia Virus protein VP39"/>
    <property type="match status" value="1"/>
</dbReference>
<dbReference type="HAMAP" id="MF_00351">
    <property type="entry name" value="RNA_methyltransf_FlpA"/>
    <property type="match status" value="1"/>
</dbReference>
<dbReference type="InterPro" id="IPR000692">
    <property type="entry name" value="Fibrillarin"/>
</dbReference>
<dbReference type="InterPro" id="IPR020813">
    <property type="entry name" value="Fibrillarin_CS"/>
</dbReference>
<dbReference type="InterPro" id="IPR029063">
    <property type="entry name" value="SAM-dependent_MTases_sf"/>
</dbReference>
<dbReference type="NCBIfam" id="NF003276">
    <property type="entry name" value="PRK04266.1-2"/>
    <property type="match status" value="1"/>
</dbReference>
<dbReference type="NCBIfam" id="NF003277">
    <property type="entry name" value="PRK04266.1-3"/>
    <property type="match status" value="1"/>
</dbReference>
<dbReference type="NCBIfam" id="NF003279">
    <property type="entry name" value="PRK04266.1-5"/>
    <property type="match status" value="1"/>
</dbReference>
<dbReference type="PANTHER" id="PTHR10335:SF17">
    <property type="entry name" value="FIBRILLARIN"/>
    <property type="match status" value="1"/>
</dbReference>
<dbReference type="PANTHER" id="PTHR10335">
    <property type="entry name" value="RRNA 2-O-METHYLTRANSFERASE FIBRILLARIN"/>
    <property type="match status" value="1"/>
</dbReference>
<dbReference type="Pfam" id="PF01269">
    <property type="entry name" value="Fibrillarin"/>
    <property type="match status" value="1"/>
</dbReference>
<dbReference type="PIRSF" id="PIRSF006540">
    <property type="entry name" value="Nop17p"/>
    <property type="match status" value="1"/>
</dbReference>
<dbReference type="PRINTS" id="PR00052">
    <property type="entry name" value="FIBRILLARIN"/>
</dbReference>
<dbReference type="SMART" id="SM01206">
    <property type="entry name" value="Fibrillarin"/>
    <property type="match status" value="1"/>
</dbReference>
<dbReference type="SUPFAM" id="SSF53335">
    <property type="entry name" value="S-adenosyl-L-methionine-dependent methyltransferases"/>
    <property type="match status" value="1"/>
</dbReference>
<dbReference type="PROSITE" id="PS00566">
    <property type="entry name" value="FIBRILLARIN"/>
    <property type="match status" value="1"/>
</dbReference>
<reference key="1">
    <citation type="journal article" date="1994" name="J. Bacteriol.">
        <title>Fibrillarin-like proteins occur in the domain Archaea.</title>
        <authorList>
            <person name="Agha Amiri K."/>
        </authorList>
    </citation>
    <scope>NUCLEOTIDE SEQUENCE [GENOMIC DNA]</scope>
    <source>
        <strain>ATCC 33273 / DSM 1537 / NBRC 100457 / OCM 70 / PS</strain>
    </source>
</reference>
<feature type="chain" id="PRO_0000148539" description="Fibrillarin-like rRNA/tRNA 2'-O-methyltransferase">
    <location>
        <begin position="1"/>
        <end position="228"/>
    </location>
</feature>
<feature type="binding site" evidence="1">
    <location>
        <begin position="85"/>
        <end position="86"/>
    </location>
    <ligand>
        <name>S-adenosyl-L-methionine</name>
        <dbReference type="ChEBI" id="CHEBI:59789"/>
    </ligand>
</feature>
<feature type="binding site" evidence="1">
    <location>
        <begin position="103"/>
        <end position="104"/>
    </location>
    <ligand>
        <name>S-adenosyl-L-methionine</name>
        <dbReference type="ChEBI" id="CHEBI:59789"/>
    </ligand>
</feature>
<feature type="binding site" evidence="1">
    <location>
        <begin position="128"/>
        <end position="129"/>
    </location>
    <ligand>
        <name>S-adenosyl-L-methionine</name>
        <dbReference type="ChEBI" id="CHEBI:59789"/>
    </ligand>
</feature>
<feature type="binding site" evidence="1">
    <location>
        <begin position="148"/>
        <end position="151"/>
    </location>
    <ligand>
        <name>S-adenosyl-L-methionine</name>
        <dbReference type="ChEBI" id="CHEBI:59789"/>
    </ligand>
</feature>
<accession>P35553</accession>
<keyword id="KW-0489">Methyltransferase</keyword>
<keyword id="KW-0694">RNA-binding</keyword>
<keyword id="KW-0698">rRNA processing</keyword>
<keyword id="KW-0808">Transferase</keyword>
<keyword id="KW-0819">tRNA processing</keyword>
<evidence type="ECO:0000255" key="1">
    <source>
        <dbReference type="HAMAP-Rule" id="MF_00351"/>
    </source>
</evidence>
<protein>
    <recommendedName>
        <fullName evidence="1">Fibrillarin-like rRNA/tRNA 2'-O-methyltransferase</fullName>
        <ecNumber evidence="1">2.1.1.-</ecNumber>
    </recommendedName>
</protein>
<name>FLPA_METVO</name>
<gene>
    <name evidence="1" type="primary">flpA</name>
    <name type="synonym">rppA</name>
</gene>